<reference key="1">
    <citation type="journal article" date="2002" name="Nature">
        <title>The genome sequence of Schizosaccharomyces pombe.</title>
        <authorList>
            <person name="Wood V."/>
            <person name="Gwilliam R."/>
            <person name="Rajandream M.A."/>
            <person name="Lyne M.H."/>
            <person name="Lyne R."/>
            <person name="Stewart A."/>
            <person name="Sgouros J.G."/>
            <person name="Peat N."/>
            <person name="Hayles J."/>
            <person name="Baker S.G."/>
            <person name="Basham D."/>
            <person name="Bowman S."/>
            <person name="Brooks K."/>
            <person name="Brown D."/>
            <person name="Brown S."/>
            <person name="Chillingworth T."/>
            <person name="Churcher C.M."/>
            <person name="Collins M."/>
            <person name="Connor R."/>
            <person name="Cronin A."/>
            <person name="Davis P."/>
            <person name="Feltwell T."/>
            <person name="Fraser A."/>
            <person name="Gentles S."/>
            <person name="Goble A."/>
            <person name="Hamlin N."/>
            <person name="Harris D.E."/>
            <person name="Hidalgo J."/>
            <person name="Hodgson G."/>
            <person name="Holroyd S."/>
            <person name="Hornsby T."/>
            <person name="Howarth S."/>
            <person name="Huckle E.J."/>
            <person name="Hunt S."/>
            <person name="Jagels K."/>
            <person name="James K.D."/>
            <person name="Jones L."/>
            <person name="Jones M."/>
            <person name="Leather S."/>
            <person name="McDonald S."/>
            <person name="McLean J."/>
            <person name="Mooney P."/>
            <person name="Moule S."/>
            <person name="Mungall K.L."/>
            <person name="Murphy L.D."/>
            <person name="Niblett D."/>
            <person name="Odell C."/>
            <person name="Oliver K."/>
            <person name="O'Neil S."/>
            <person name="Pearson D."/>
            <person name="Quail M.A."/>
            <person name="Rabbinowitsch E."/>
            <person name="Rutherford K.M."/>
            <person name="Rutter S."/>
            <person name="Saunders D."/>
            <person name="Seeger K."/>
            <person name="Sharp S."/>
            <person name="Skelton J."/>
            <person name="Simmonds M.N."/>
            <person name="Squares R."/>
            <person name="Squares S."/>
            <person name="Stevens K."/>
            <person name="Taylor K."/>
            <person name="Taylor R.G."/>
            <person name="Tivey A."/>
            <person name="Walsh S.V."/>
            <person name="Warren T."/>
            <person name="Whitehead S."/>
            <person name="Woodward J.R."/>
            <person name="Volckaert G."/>
            <person name="Aert R."/>
            <person name="Robben J."/>
            <person name="Grymonprez B."/>
            <person name="Weltjens I."/>
            <person name="Vanstreels E."/>
            <person name="Rieger M."/>
            <person name="Schaefer M."/>
            <person name="Mueller-Auer S."/>
            <person name="Gabel C."/>
            <person name="Fuchs M."/>
            <person name="Duesterhoeft A."/>
            <person name="Fritzc C."/>
            <person name="Holzer E."/>
            <person name="Moestl D."/>
            <person name="Hilbert H."/>
            <person name="Borzym K."/>
            <person name="Langer I."/>
            <person name="Beck A."/>
            <person name="Lehrach H."/>
            <person name="Reinhardt R."/>
            <person name="Pohl T.M."/>
            <person name="Eger P."/>
            <person name="Zimmermann W."/>
            <person name="Wedler H."/>
            <person name="Wambutt R."/>
            <person name="Purnelle B."/>
            <person name="Goffeau A."/>
            <person name="Cadieu E."/>
            <person name="Dreano S."/>
            <person name="Gloux S."/>
            <person name="Lelaure V."/>
            <person name="Mottier S."/>
            <person name="Galibert F."/>
            <person name="Aves S.J."/>
            <person name="Xiang Z."/>
            <person name="Hunt C."/>
            <person name="Moore K."/>
            <person name="Hurst S.M."/>
            <person name="Lucas M."/>
            <person name="Rochet M."/>
            <person name="Gaillardin C."/>
            <person name="Tallada V.A."/>
            <person name="Garzon A."/>
            <person name="Thode G."/>
            <person name="Daga R.R."/>
            <person name="Cruzado L."/>
            <person name="Jimenez J."/>
            <person name="Sanchez M."/>
            <person name="del Rey F."/>
            <person name="Benito J."/>
            <person name="Dominguez A."/>
            <person name="Revuelta J.L."/>
            <person name="Moreno S."/>
            <person name="Armstrong J."/>
            <person name="Forsburg S.L."/>
            <person name="Cerutti L."/>
            <person name="Lowe T."/>
            <person name="McCombie W.R."/>
            <person name="Paulsen I."/>
            <person name="Potashkin J."/>
            <person name="Shpakovski G.V."/>
            <person name="Ussery D."/>
            <person name="Barrell B.G."/>
            <person name="Nurse P."/>
        </authorList>
    </citation>
    <scope>NUCLEOTIDE SEQUENCE [LARGE SCALE GENOMIC DNA]</scope>
    <source>
        <strain>972 / ATCC 24843</strain>
    </source>
</reference>
<reference key="2">
    <citation type="journal article" date="2011" name="Science">
        <title>Comparative functional genomics of the fission yeasts.</title>
        <authorList>
            <person name="Rhind N."/>
            <person name="Chen Z."/>
            <person name="Yassour M."/>
            <person name="Thompson D.A."/>
            <person name="Haas B.J."/>
            <person name="Habib N."/>
            <person name="Wapinski I."/>
            <person name="Roy S."/>
            <person name="Lin M.F."/>
            <person name="Heiman D.I."/>
            <person name="Young S.K."/>
            <person name="Furuya K."/>
            <person name="Guo Y."/>
            <person name="Pidoux A."/>
            <person name="Chen H.M."/>
            <person name="Robbertse B."/>
            <person name="Goldberg J.M."/>
            <person name="Aoki K."/>
            <person name="Bayne E.H."/>
            <person name="Berlin A.M."/>
            <person name="Desjardins C.A."/>
            <person name="Dobbs E."/>
            <person name="Dukaj L."/>
            <person name="Fan L."/>
            <person name="FitzGerald M.G."/>
            <person name="French C."/>
            <person name="Gujja S."/>
            <person name="Hansen K."/>
            <person name="Keifenheim D."/>
            <person name="Levin J.Z."/>
            <person name="Mosher R.A."/>
            <person name="Mueller C.A."/>
            <person name="Pfiffner J."/>
            <person name="Priest M."/>
            <person name="Russ C."/>
            <person name="Smialowska A."/>
            <person name="Swoboda P."/>
            <person name="Sykes S.M."/>
            <person name="Vaughn M."/>
            <person name="Vengrova S."/>
            <person name="Yoder R."/>
            <person name="Zeng Q."/>
            <person name="Allshire R."/>
            <person name="Baulcombe D."/>
            <person name="Birren B.W."/>
            <person name="Brown W."/>
            <person name="Ekwall K."/>
            <person name="Kellis M."/>
            <person name="Leatherwood J."/>
            <person name="Levin H."/>
            <person name="Margalit H."/>
            <person name="Martienssen R."/>
            <person name="Nieduszynski C.A."/>
            <person name="Spatafora J.W."/>
            <person name="Friedman N."/>
            <person name="Dalgaard J.Z."/>
            <person name="Baumann P."/>
            <person name="Niki H."/>
            <person name="Regev A."/>
            <person name="Nusbaum C."/>
        </authorList>
    </citation>
    <scope>REVISION OF GENE MODEL</scope>
</reference>
<reference key="3">
    <citation type="journal article" date="2006" name="Nat. Biotechnol.">
        <title>ORFeome cloning and global analysis of protein localization in the fission yeast Schizosaccharomyces pombe.</title>
        <authorList>
            <person name="Matsuyama A."/>
            <person name="Arai R."/>
            <person name="Yashiroda Y."/>
            <person name="Shirai A."/>
            <person name="Kamata A."/>
            <person name="Sekido S."/>
            <person name="Kobayashi Y."/>
            <person name="Hashimoto A."/>
            <person name="Hamamoto M."/>
            <person name="Hiraoka Y."/>
            <person name="Horinouchi S."/>
            <person name="Yoshida M."/>
        </authorList>
    </citation>
    <scope>SUBCELLULAR LOCATION [LARGE SCALE ANALYSIS]</scope>
</reference>
<reference key="4">
    <citation type="journal article" date="2011" name="Genetics">
        <title>Augmented annotation of the Schizosaccharomyces pombe genome reveals additional genes required for growth and viability.</title>
        <authorList>
            <person name="Bitton D.A."/>
            <person name="Wood V."/>
            <person name="Scutt P.J."/>
            <person name="Grallert A."/>
            <person name="Yates T."/>
            <person name="Smith D.L."/>
            <person name="Hagan I.M."/>
            <person name="Miller C.J."/>
        </authorList>
    </citation>
    <scope>REVISION OF GENE MODEL</scope>
</reference>
<evidence type="ECO:0000256" key="1">
    <source>
        <dbReference type="SAM" id="MobiDB-lite"/>
    </source>
</evidence>
<evidence type="ECO:0000269" key="2">
    <source>
    </source>
</evidence>
<comment type="subcellular location">
    <subcellularLocation>
        <location evidence="2">Cytoplasm</location>
    </subcellularLocation>
    <text>Localizes at the cell tip and the barrier septum.</text>
</comment>
<proteinExistence type="predicted"/>
<feature type="chain" id="PRO_0000372376" description="GTPase-binding protein rid1">
    <location>
        <begin position="1"/>
        <end position="400"/>
    </location>
</feature>
<feature type="domain" description="GBD/FH3">
    <location>
        <begin position="39"/>
        <end position="400"/>
    </location>
</feature>
<feature type="region of interest" description="Disordered" evidence="1">
    <location>
        <begin position="16"/>
        <end position="47"/>
    </location>
</feature>
<feature type="compositionally biased region" description="Polar residues" evidence="1">
    <location>
        <begin position="16"/>
        <end position="27"/>
    </location>
</feature>
<organism>
    <name type="scientific">Schizosaccharomyces pombe (strain 972 / ATCC 24843)</name>
    <name type="common">Fission yeast</name>
    <dbReference type="NCBI Taxonomy" id="284812"/>
    <lineage>
        <taxon>Eukaryota</taxon>
        <taxon>Fungi</taxon>
        <taxon>Dikarya</taxon>
        <taxon>Ascomycota</taxon>
        <taxon>Taphrinomycotina</taxon>
        <taxon>Schizosaccharomycetes</taxon>
        <taxon>Schizosaccharomycetales</taxon>
        <taxon>Schizosaccharomycetaceae</taxon>
        <taxon>Schizosaccharomyces</taxon>
    </lineage>
</organism>
<accession>O74737</accession>
<keyword id="KW-0963">Cytoplasm</keyword>
<keyword id="KW-1185">Reference proteome</keyword>
<sequence>MNSLRSVKRLLGARSLSSDGLSESVNSSDREDSLSFQTPSTPSEDEMPQCFEDLIKPQVLSSEASKSLLSLNEGIKMEIVSSLQQKDQKKRNKLIAWMRKKPCYEQPDDFISYIVNTKIDSIDESIIHKLALLLRNEQVIWVEKFIHNGGFGVVFCTIDKISRLEWREELHDSILEQLLLCVKAMCTVQRGLECLSQSTYNVERLISLLLSKKQPCDFVVREVLVQIVHSFYKAHLDKEEGAMQVFSLFSIKDDKDEEVEFLKNVRVDRPFRRWIIELEDVSRNVFWVWNHDSNVIDLEKQYNQVYEAPLGFIGGIETEATSYVAAHIHLINELLEGLPLEKRQRKRLELQLSGLERIMGLRFRKSSQKFHKKLHEALREWIVAAKIDDWPYKLVQTGST</sequence>
<dbReference type="EMBL" id="CU329671">
    <property type="protein sequence ID" value="CAA21251.2"/>
    <property type="molecule type" value="Genomic_DNA"/>
</dbReference>
<dbReference type="PIR" id="T39640">
    <property type="entry name" value="T39640"/>
</dbReference>
<dbReference type="RefSeq" id="NP_595445.2">
    <property type="nucleotide sequence ID" value="NM_001021354.2"/>
</dbReference>
<dbReference type="BioGRID" id="276440">
    <property type="interactions" value="2"/>
</dbReference>
<dbReference type="STRING" id="284812.O74737"/>
<dbReference type="iPTMnet" id="O74737"/>
<dbReference type="PaxDb" id="4896-SPBC1709.12.1"/>
<dbReference type="EnsemblFungi" id="SPBC1709.12.1">
    <property type="protein sequence ID" value="SPBC1709.12.1:pep"/>
    <property type="gene ID" value="SPBC1709.12"/>
</dbReference>
<dbReference type="GeneID" id="2539894"/>
<dbReference type="KEGG" id="spo:2539894"/>
<dbReference type="PomBase" id="SPBC1709.12">
    <property type="gene designation" value="rid1"/>
</dbReference>
<dbReference type="VEuPathDB" id="FungiDB:SPBC1709.12"/>
<dbReference type="eggNOG" id="ENOG502RXE8">
    <property type="taxonomic scope" value="Eukaryota"/>
</dbReference>
<dbReference type="HOGENOM" id="CLU_689189_0_0_1"/>
<dbReference type="InParanoid" id="O74737"/>
<dbReference type="OMA" id="VFWVWNH"/>
<dbReference type="PRO" id="PR:O74737"/>
<dbReference type="Proteomes" id="UP000002485">
    <property type="component" value="Chromosome II"/>
</dbReference>
<dbReference type="GO" id="GO:0032153">
    <property type="term" value="C:cell division site"/>
    <property type="evidence" value="ECO:0007005"/>
    <property type="project" value="PomBase"/>
</dbReference>
<dbReference type="GO" id="GO:0051286">
    <property type="term" value="C:cell tip"/>
    <property type="evidence" value="ECO:0007005"/>
    <property type="project" value="PomBase"/>
</dbReference>
<dbReference type="GO" id="GO:0005829">
    <property type="term" value="C:cytosol"/>
    <property type="evidence" value="ECO:0007005"/>
    <property type="project" value="PomBase"/>
</dbReference>
<dbReference type="GO" id="GO:0003779">
    <property type="term" value="F:actin binding"/>
    <property type="evidence" value="ECO:0007669"/>
    <property type="project" value="InterPro"/>
</dbReference>
<dbReference type="GO" id="GO:0031267">
    <property type="term" value="F:small GTPase binding"/>
    <property type="evidence" value="ECO:0000255"/>
    <property type="project" value="PomBase"/>
</dbReference>
<dbReference type="GO" id="GO:0030036">
    <property type="term" value="P:actin cytoskeleton organization"/>
    <property type="evidence" value="ECO:0000255"/>
    <property type="project" value="PomBase"/>
</dbReference>
<dbReference type="Gene3D" id="1.25.10.10">
    <property type="entry name" value="Leucine-rich Repeat Variant"/>
    <property type="match status" value="1"/>
</dbReference>
<dbReference type="InterPro" id="IPR051661">
    <property type="entry name" value="Actin_filament_regulator"/>
</dbReference>
<dbReference type="InterPro" id="IPR011989">
    <property type="entry name" value="ARM-like"/>
</dbReference>
<dbReference type="InterPro" id="IPR016024">
    <property type="entry name" value="ARM-type_fold"/>
</dbReference>
<dbReference type="InterPro" id="IPR010473">
    <property type="entry name" value="GTPase-bd"/>
</dbReference>
<dbReference type="PANTHER" id="PTHR47102">
    <property type="entry name" value="PROTEIN BNI1"/>
    <property type="match status" value="1"/>
</dbReference>
<dbReference type="PANTHER" id="PTHR47102:SF2">
    <property type="entry name" value="PROTEIN BNI1"/>
    <property type="match status" value="1"/>
</dbReference>
<dbReference type="Pfam" id="PF06371">
    <property type="entry name" value="Drf_GBD"/>
    <property type="match status" value="1"/>
</dbReference>
<dbReference type="SMART" id="SM01140">
    <property type="entry name" value="Drf_GBD"/>
    <property type="match status" value="1"/>
</dbReference>
<dbReference type="SUPFAM" id="SSF48371">
    <property type="entry name" value="ARM repeat"/>
    <property type="match status" value="1"/>
</dbReference>
<name>RID1_SCHPO</name>
<protein>
    <recommendedName>
        <fullName>GTPase-binding protein rid1</fullName>
    </recommendedName>
</protein>
<gene>
    <name type="primary">rid1</name>
    <name type="ORF">SPBC1709.12</name>
</gene>